<feature type="chain" id="PRO_1000202632" description="Glutamyl-tRNA reductase">
    <location>
        <begin position="1"/>
        <end position="453"/>
    </location>
</feature>
<feature type="region of interest" description="Disordered" evidence="2">
    <location>
        <begin position="423"/>
        <end position="453"/>
    </location>
</feature>
<feature type="compositionally biased region" description="Basic and acidic residues" evidence="2">
    <location>
        <begin position="423"/>
        <end position="436"/>
    </location>
</feature>
<feature type="compositionally biased region" description="Acidic residues" evidence="2">
    <location>
        <begin position="442"/>
        <end position="453"/>
    </location>
</feature>
<feature type="active site" description="Nucleophile" evidence="1">
    <location>
        <position position="51"/>
    </location>
</feature>
<feature type="binding site" evidence="1">
    <location>
        <begin position="50"/>
        <end position="53"/>
    </location>
    <ligand>
        <name>substrate</name>
    </ligand>
</feature>
<feature type="binding site" evidence="1">
    <location>
        <position position="110"/>
    </location>
    <ligand>
        <name>substrate</name>
    </ligand>
</feature>
<feature type="binding site" evidence="1">
    <location>
        <begin position="115"/>
        <end position="117"/>
    </location>
    <ligand>
        <name>substrate</name>
    </ligand>
</feature>
<feature type="binding site" evidence="1">
    <location>
        <position position="121"/>
    </location>
    <ligand>
        <name>substrate</name>
    </ligand>
</feature>
<feature type="binding site" evidence="1">
    <location>
        <begin position="190"/>
        <end position="195"/>
    </location>
    <ligand>
        <name>NADP(+)</name>
        <dbReference type="ChEBI" id="CHEBI:58349"/>
    </ligand>
</feature>
<feature type="site" description="Important for activity" evidence="1">
    <location>
        <position position="100"/>
    </location>
</feature>
<gene>
    <name evidence="1" type="primary">hemA</name>
    <name type="ordered locus">DMR_16420</name>
</gene>
<name>HEM1_SOLM1</name>
<proteinExistence type="inferred from homology"/>
<keyword id="KW-0521">NADP</keyword>
<keyword id="KW-0560">Oxidoreductase</keyword>
<keyword id="KW-0627">Porphyrin biosynthesis</keyword>
<organism>
    <name type="scientific">Solidesulfovibrio magneticus (strain ATCC 700980 / DSM 13731 / RS-1)</name>
    <name type="common">Desulfovibrio magneticus</name>
    <dbReference type="NCBI Taxonomy" id="573370"/>
    <lineage>
        <taxon>Bacteria</taxon>
        <taxon>Pseudomonadati</taxon>
        <taxon>Thermodesulfobacteriota</taxon>
        <taxon>Desulfovibrionia</taxon>
        <taxon>Desulfovibrionales</taxon>
        <taxon>Desulfovibrionaceae</taxon>
        <taxon>Solidesulfovibrio</taxon>
    </lineage>
</organism>
<dbReference type="EC" id="1.2.1.70" evidence="1"/>
<dbReference type="EMBL" id="AP010904">
    <property type="protein sequence ID" value="BAH75133.1"/>
    <property type="molecule type" value="Genomic_DNA"/>
</dbReference>
<dbReference type="RefSeq" id="WP_015860336.1">
    <property type="nucleotide sequence ID" value="NC_012796.1"/>
</dbReference>
<dbReference type="SMR" id="C4XPF2"/>
<dbReference type="STRING" id="573370.DMR_16420"/>
<dbReference type="KEGG" id="dma:DMR_16420"/>
<dbReference type="eggNOG" id="COG0373">
    <property type="taxonomic scope" value="Bacteria"/>
</dbReference>
<dbReference type="HOGENOM" id="CLU_035113_2_2_7"/>
<dbReference type="OrthoDB" id="110209at2"/>
<dbReference type="UniPathway" id="UPA00251">
    <property type="reaction ID" value="UER00316"/>
</dbReference>
<dbReference type="Proteomes" id="UP000009071">
    <property type="component" value="Chromosome"/>
</dbReference>
<dbReference type="GO" id="GO:0008883">
    <property type="term" value="F:glutamyl-tRNA reductase activity"/>
    <property type="evidence" value="ECO:0007669"/>
    <property type="project" value="UniProtKB-UniRule"/>
</dbReference>
<dbReference type="GO" id="GO:0050661">
    <property type="term" value="F:NADP binding"/>
    <property type="evidence" value="ECO:0007669"/>
    <property type="project" value="InterPro"/>
</dbReference>
<dbReference type="GO" id="GO:0019353">
    <property type="term" value="P:protoporphyrinogen IX biosynthetic process from glutamate"/>
    <property type="evidence" value="ECO:0007669"/>
    <property type="project" value="TreeGrafter"/>
</dbReference>
<dbReference type="CDD" id="cd05213">
    <property type="entry name" value="NAD_bind_Glutamyl_tRNA_reduct"/>
    <property type="match status" value="1"/>
</dbReference>
<dbReference type="FunFam" id="3.30.460.30:FF:000001">
    <property type="entry name" value="Glutamyl-tRNA reductase"/>
    <property type="match status" value="1"/>
</dbReference>
<dbReference type="FunFam" id="3.40.50.720:FF:000031">
    <property type="entry name" value="Glutamyl-tRNA reductase"/>
    <property type="match status" value="1"/>
</dbReference>
<dbReference type="Gene3D" id="3.30.460.30">
    <property type="entry name" value="Glutamyl-tRNA reductase, N-terminal domain"/>
    <property type="match status" value="1"/>
</dbReference>
<dbReference type="Gene3D" id="3.40.50.720">
    <property type="entry name" value="NAD(P)-binding Rossmann-like Domain"/>
    <property type="match status" value="1"/>
</dbReference>
<dbReference type="HAMAP" id="MF_00087">
    <property type="entry name" value="Glu_tRNA_reductase"/>
    <property type="match status" value="1"/>
</dbReference>
<dbReference type="InterPro" id="IPR000343">
    <property type="entry name" value="4pyrrol_synth_GluRdtase"/>
</dbReference>
<dbReference type="InterPro" id="IPR015896">
    <property type="entry name" value="4pyrrol_synth_GluRdtase_dimer"/>
</dbReference>
<dbReference type="InterPro" id="IPR015895">
    <property type="entry name" value="4pyrrol_synth_GluRdtase_N"/>
</dbReference>
<dbReference type="InterPro" id="IPR018214">
    <property type="entry name" value="GluRdtase_CS"/>
</dbReference>
<dbReference type="InterPro" id="IPR036453">
    <property type="entry name" value="GluRdtase_dimer_dom_sf"/>
</dbReference>
<dbReference type="InterPro" id="IPR036343">
    <property type="entry name" value="GluRdtase_N_sf"/>
</dbReference>
<dbReference type="InterPro" id="IPR036291">
    <property type="entry name" value="NAD(P)-bd_dom_sf"/>
</dbReference>
<dbReference type="InterPro" id="IPR006151">
    <property type="entry name" value="Shikm_DH/Glu-tRNA_Rdtase"/>
</dbReference>
<dbReference type="NCBIfam" id="TIGR01035">
    <property type="entry name" value="hemA"/>
    <property type="match status" value="1"/>
</dbReference>
<dbReference type="PANTHER" id="PTHR43013">
    <property type="entry name" value="GLUTAMYL-TRNA REDUCTASE"/>
    <property type="match status" value="1"/>
</dbReference>
<dbReference type="PANTHER" id="PTHR43013:SF1">
    <property type="entry name" value="GLUTAMYL-TRNA REDUCTASE"/>
    <property type="match status" value="1"/>
</dbReference>
<dbReference type="Pfam" id="PF00745">
    <property type="entry name" value="GlutR_dimer"/>
    <property type="match status" value="1"/>
</dbReference>
<dbReference type="Pfam" id="PF05201">
    <property type="entry name" value="GlutR_N"/>
    <property type="match status" value="1"/>
</dbReference>
<dbReference type="Pfam" id="PF01488">
    <property type="entry name" value="Shikimate_DH"/>
    <property type="match status" value="1"/>
</dbReference>
<dbReference type="PIRSF" id="PIRSF000445">
    <property type="entry name" value="4pyrrol_synth_GluRdtase"/>
    <property type="match status" value="1"/>
</dbReference>
<dbReference type="SUPFAM" id="SSF69742">
    <property type="entry name" value="Glutamyl tRNA-reductase catalytic, N-terminal domain"/>
    <property type="match status" value="1"/>
</dbReference>
<dbReference type="SUPFAM" id="SSF69075">
    <property type="entry name" value="Glutamyl tRNA-reductase dimerization domain"/>
    <property type="match status" value="1"/>
</dbReference>
<dbReference type="SUPFAM" id="SSF51735">
    <property type="entry name" value="NAD(P)-binding Rossmann-fold domains"/>
    <property type="match status" value="1"/>
</dbReference>
<dbReference type="PROSITE" id="PS00747">
    <property type="entry name" value="GLUTR"/>
    <property type="match status" value="1"/>
</dbReference>
<evidence type="ECO:0000255" key="1">
    <source>
        <dbReference type="HAMAP-Rule" id="MF_00087"/>
    </source>
</evidence>
<evidence type="ECO:0000256" key="2">
    <source>
        <dbReference type="SAM" id="MobiDB-lite"/>
    </source>
</evidence>
<reference key="1">
    <citation type="journal article" date="2009" name="Genome Res.">
        <title>Whole genome sequence of Desulfovibrio magneticus strain RS-1 revealed common gene clusters in magnetotactic bacteria.</title>
        <authorList>
            <person name="Nakazawa H."/>
            <person name="Arakaki A."/>
            <person name="Narita-Yamada S."/>
            <person name="Yashiro I."/>
            <person name="Jinno K."/>
            <person name="Aoki N."/>
            <person name="Tsuruyama A."/>
            <person name="Okamura Y."/>
            <person name="Tanikawa S."/>
            <person name="Fujita N."/>
            <person name="Takeyama H."/>
            <person name="Matsunaga T."/>
        </authorList>
    </citation>
    <scope>NUCLEOTIDE SEQUENCE [LARGE SCALE GENOMIC DNA]</scope>
    <source>
        <strain>ATCC 700980 / DSM 13731 / RS-1</strain>
    </source>
</reference>
<accession>C4XPF2</accession>
<sequence>MEQQIYLFGLNHKTAGVEVREAFALGERPKLGELLVDGEARVREALVLSTCNRVEVLVVDPVGRDPKAAVLAAWAGQCGQDPALLAPHLYAHQGMAAVDHLFCVASGLDSLVLGEPQILGQLKAAYRHAVASRTAGVIINRLCHKAFSVAKKVRTATGIGASAVSISYAAVELAKRIFGEMAGKKAMLVGAGEMAELAAMHLLTSGVSEILVANRTYARAEELAGRFKGRAVAFEEFVSRLHEVDIVISSTGAPHVVIRAKDVRAVLKARRHKPMFFIDIAVPRDIDPDINSLDNVYLYDIDDLQEVVEENLAQRREEAARARDIIGLQVERFGEWVKSLDVKPTIVDLLDVGASLARQELQKTLRRLGPEVPEETRAALETMALSISRKMLHEPIAFLKRRAKEEHGERFVDLTRRMYNLDREKVPTDAHADRKPPNFAETSDDFDVTDASE</sequence>
<protein>
    <recommendedName>
        <fullName evidence="1">Glutamyl-tRNA reductase</fullName>
        <shortName evidence="1">GluTR</shortName>
        <ecNumber evidence="1">1.2.1.70</ecNumber>
    </recommendedName>
</protein>
<comment type="function">
    <text evidence="1">Catalyzes the NADPH-dependent reduction of glutamyl-tRNA(Glu) to glutamate 1-semialdehyde (GSA).</text>
</comment>
<comment type="catalytic activity">
    <reaction evidence="1">
        <text>(S)-4-amino-5-oxopentanoate + tRNA(Glu) + NADP(+) = L-glutamyl-tRNA(Glu) + NADPH + H(+)</text>
        <dbReference type="Rhea" id="RHEA:12344"/>
        <dbReference type="Rhea" id="RHEA-COMP:9663"/>
        <dbReference type="Rhea" id="RHEA-COMP:9680"/>
        <dbReference type="ChEBI" id="CHEBI:15378"/>
        <dbReference type="ChEBI" id="CHEBI:57501"/>
        <dbReference type="ChEBI" id="CHEBI:57783"/>
        <dbReference type="ChEBI" id="CHEBI:58349"/>
        <dbReference type="ChEBI" id="CHEBI:78442"/>
        <dbReference type="ChEBI" id="CHEBI:78520"/>
        <dbReference type="EC" id="1.2.1.70"/>
    </reaction>
</comment>
<comment type="pathway">
    <text evidence="1">Porphyrin-containing compound metabolism; protoporphyrin-IX biosynthesis; 5-aminolevulinate from L-glutamyl-tRNA(Glu): step 1/2.</text>
</comment>
<comment type="subunit">
    <text evidence="1">Homodimer.</text>
</comment>
<comment type="domain">
    <text evidence="1">Possesses an unusual extended V-shaped dimeric structure with each monomer consisting of three distinct domains arranged along a curved 'spinal' alpha-helix. The N-terminal catalytic domain specifically recognizes the glutamate moiety of the substrate. The second domain is the NADPH-binding domain, and the third C-terminal domain is responsible for dimerization.</text>
</comment>
<comment type="miscellaneous">
    <text evidence="1">During catalysis, the active site Cys acts as a nucleophile attacking the alpha-carbonyl group of tRNA-bound glutamate with the formation of a thioester intermediate between enzyme and glutamate, and the concomitant release of tRNA(Glu). The thioester intermediate is finally reduced by direct hydride transfer from NADPH, to form the product GSA.</text>
</comment>
<comment type="similarity">
    <text evidence="1">Belongs to the glutamyl-tRNA reductase family.</text>
</comment>